<keyword id="KW-0325">Glycoprotein</keyword>
<keyword id="KW-0413">Isomerase</keyword>
<keyword id="KW-0472">Membrane</keyword>
<keyword id="KW-1185">Reference proteome</keyword>
<keyword id="KW-0812">Transmembrane</keyword>
<keyword id="KW-1133">Transmembrane helix</keyword>
<name>VERU1_PENPO</name>
<comment type="function">
    <text evidence="4 7">Terpene cyclase; part of the gene cluster that mediates the biosynthesis of the neurotoxin verrucosidin, a methylated alpha-pyrone polyketide that inhibits oxidative phosphorylation in mitochondria and thereby causes neurological diseases (PubMed:34093475). The carbon backbone of verrucosidin is synthesized by the HR-PKS verA, and further modified by the other verrucodidin cluster enzymes (Probable).</text>
</comment>
<comment type="pathway">
    <text evidence="7">Secondary metabolite biosynthesis; terpenoid biosynthesis.</text>
</comment>
<comment type="pathway">
    <text evidence="7">Mycotoxin biosynthesis.</text>
</comment>
<comment type="subcellular location">
    <subcellularLocation>
        <location evidence="2">Membrane</location>
        <topology evidence="2">Multi-pass membrane protein</topology>
    </subcellularLocation>
</comment>
<comment type="similarity">
    <text evidence="6">Belongs to the membrane-bound ascI terpene cyclase family.</text>
</comment>
<organism>
    <name type="scientific">Penicillium polonicum</name>
    <dbReference type="NCBI Taxonomy" id="60169"/>
    <lineage>
        <taxon>Eukaryota</taxon>
        <taxon>Fungi</taxon>
        <taxon>Dikarya</taxon>
        <taxon>Ascomycota</taxon>
        <taxon>Pezizomycotina</taxon>
        <taxon>Eurotiomycetes</taxon>
        <taxon>Eurotiomycetidae</taxon>
        <taxon>Eurotiales</taxon>
        <taxon>Aspergillaceae</taxon>
        <taxon>Penicillium</taxon>
    </lineage>
</organism>
<proteinExistence type="inferred from homology"/>
<feature type="chain" id="PRO_0000455374" description="Terpene cyclase verU1">
    <location>
        <begin position="1"/>
        <end position="367"/>
    </location>
</feature>
<feature type="transmembrane region" description="Helical" evidence="2">
    <location>
        <begin position="8"/>
        <end position="28"/>
    </location>
</feature>
<feature type="transmembrane region" description="Helical" evidence="2">
    <location>
        <begin position="57"/>
        <end position="77"/>
    </location>
</feature>
<feature type="transmembrane region" description="Helical" evidence="2">
    <location>
        <begin position="85"/>
        <end position="105"/>
    </location>
</feature>
<feature type="transmembrane region" description="Helical" evidence="2">
    <location>
        <begin position="120"/>
        <end position="140"/>
    </location>
</feature>
<feature type="transmembrane region" description="Helical" evidence="2">
    <location>
        <begin position="169"/>
        <end position="189"/>
    </location>
</feature>
<feature type="transmembrane region" description="Helical" evidence="2">
    <location>
        <begin position="197"/>
        <end position="217"/>
    </location>
</feature>
<feature type="transmembrane region" description="Helical" evidence="2">
    <location>
        <begin position="239"/>
        <end position="259"/>
    </location>
</feature>
<feature type="transmembrane region" description="Helical" evidence="2">
    <location>
        <begin position="292"/>
        <end position="312"/>
    </location>
</feature>
<feature type="transmembrane region" description="Helical" evidence="2">
    <location>
        <begin position="327"/>
        <end position="347"/>
    </location>
</feature>
<feature type="glycosylation site" description="N-linked (GlcNAc...) asparagine" evidence="3">
    <location>
        <position position="50"/>
    </location>
</feature>
<feature type="glycosylation site" description="N-linked (GlcNAc...) asparagine" evidence="3">
    <location>
        <position position="352"/>
    </location>
</feature>
<accession>A0A1V6NYL5</accession>
<gene>
    <name evidence="5" type="primary">verU1</name>
    <name evidence="5" type="synonym">cl4U1</name>
    <name type="ORF">PENPOL_c002G01858</name>
</gene>
<sequence length="367" mass="39830">MSTAVNTIRCSLLLLGLVGIYTVWISSFRNGLFLRNEEFAGKGQLPGTPNATLRTHFTGIDTLDKALGIFVVFYWPVCQGNLRSLSLIAFPAAVGVGEMWILFALQFSQSNSPTRAMGKMAMFGMGLMLVGPGIFLPIYCSLDLSSTHRLDDSPSSAAEGHLCRNLRSCLLGGYYILVILLALPSPAVVSYGSKQGIIALLQGWPLLVSAMLWLTHLCGKDRTADFQATLSTARTSIYISAMACATISHLVPLLISLLADSSDICPGKVFVPHLAWPSRRVTSVEEGLLRFFQWDYGLGSLALLLWAVGLHIQRRQQISQGINYLRLIPEALFLSVMMSPCGAAALYLYRHNSTNCASKTGDKSGSG</sequence>
<dbReference type="EC" id="5.4.99.-" evidence="1"/>
<dbReference type="EMBL" id="MDYM01000002">
    <property type="protein sequence ID" value="OQD69720.1"/>
    <property type="molecule type" value="Genomic_DNA"/>
</dbReference>
<dbReference type="STRING" id="60169.A0A1V6NYL5"/>
<dbReference type="GlyCosmos" id="A0A1V6NYL5">
    <property type="glycosylation" value="2 sites, No reported glycans"/>
</dbReference>
<dbReference type="OrthoDB" id="67590at5073"/>
<dbReference type="UniPathway" id="UPA00213"/>
<dbReference type="Proteomes" id="UP000191408">
    <property type="component" value="Unassembled WGS sequence"/>
</dbReference>
<dbReference type="GO" id="GO:0016020">
    <property type="term" value="C:membrane"/>
    <property type="evidence" value="ECO:0007669"/>
    <property type="project" value="UniProtKB-SubCell"/>
</dbReference>
<dbReference type="GO" id="GO:0016853">
    <property type="term" value="F:isomerase activity"/>
    <property type="evidence" value="ECO:0007669"/>
    <property type="project" value="UniProtKB-KW"/>
</dbReference>
<dbReference type="GO" id="GO:0016114">
    <property type="term" value="P:terpenoid biosynthetic process"/>
    <property type="evidence" value="ECO:0007669"/>
    <property type="project" value="UniProtKB-UniPathway"/>
</dbReference>
<evidence type="ECO:0000250" key="1">
    <source>
        <dbReference type="UniProtKB" id="A0A455R4Z0"/>
    </source>
</evidence>
<evidence type="ECO:0000255" key="2"/>
<evidence type="ECO:0000255" key="3">
    <source>
        <dbReference type="PROSITE-ProRule" id="PRU00498"/>
    </source>
</evidence>
<evidence type="ECO:0000269" key="4">
    <source>
    </source>
</evidence>
<evidence type="ECO:0000303" key="5">
    <source>
    </source>
</evidence>
<evidence type="ECO:0000305" key="6"/>
<evidence type="ECO:0000305" key="7">
    <source>
    </source>
</evidence>
<reference key="1">
    <citation type="journal article" date="2017" name="Nat. Microbiol.">
        <title>Global analysis of biosynthetic gene clusters reveals vast potential of secondary metabolite production in Penicillium species.</title>
        <authorList>
            <person name="Nielsen J.C."/>
            <person name="Grijseels S."/>
            <person name="Prigent S."/>
            <person name="Ji B."/>
            <person name="Dainat J."/>
            <person name="Nielsen K.F."/>
            <person name="Frisvad J.C."/>
            <person name="Workman M."/>
            <person name="Nielsen J."/>
        </authorList>
    </citation>
    <scope>NUCLEOTIDE SEQUENCE [LARGE SCALE GENOMIC DNA]</scope>
    <source>
        <strain>IBT 4502</strain>
    </source>
</reference>
<reference key="2">
    <citation type="journal article" date="2021" name="Front. Microbiol.">
        <title>CRISPR-Cas9-Based Discovery of the Verrucosidin Biosynthesis Gene Cluster in Penicillium polonicum.</title>
        <authorList>
            <person name="Valente S."/>
            <person name="Piombo E."/>
            <person name="Schroeckh V."/>
            <person name="Meloni G.R."/>
            <person name="Heinekamp T."/>
            <person name="Brakhage A.A."/>
            <person name="Spadaro D."/>
        </authorList>
    </citation>
    <scope>FUNCTION</scope>
</reference>
<protein>
    <recommendedName>
        <fullName evidence="1">Terpene cyclase verU1</fullName>
        <ecNumber evidence="1">5.4.99.-</ecNumber>
    </recommendedName>
    <alternativeName>
        <fullName evidence="5">Cluster 4 protein U1</fullName>
    </alternativeName>
    <alternativeName>
        <fullName evidence="5">Verrucosidin biosynthesis cluster protein U1</fullName>
    </alternativeName>
</protein>